<dbReference type="EC" id="6.1.1.11"/>
<dbReference type="EMBL" id="L77117">
    <property type="protein sequence ID" value="AAB99075.1"/>
    <property type="molecule type" value="Genomic_DNA"/>
</dbReference>
<dbReference type="PIR" id="D64434">
    <property type="entry name" value="D64434"/>
</dbReference>
<dbReference type="RefSeq" id="WP_010870589.1">
    <property type="nucleotide sequence ID" value="NC_000909.1"/>
</dbReference>
<dbReference type="SMR" id="Q58477"/>
<dbReference type="FunCoup" id="Q58477">
    <property type="interactions" value="28"/>
</dbReference>
<dbReference type="STRING" id="243232.MJ_1077"/>
<dbReference type="PaxDb" id="243232-MJ_1077"/>
<dbReference type="EnsemblBacteria" id="AAB99075">
    <property type="protein sequence ID" value="AAB99075"/>
    <property type="gene ID" value="MJ_1077"/>
</dbReference>
<dbReference type="GeneID" id="1451973"/>
<dbReference type="KEGG" id="mja:MJ_1077"/>
<dbReference type="eggNOG" id="arCOG00403">
    <property type="taxonomic scope" value="Archaea"/>
</dbReference>
<dbReference type="HOGENOM" id="CLU_542524_0_0_2"/>
<dbReference type="InParanoid" id="Q58477"/>
<dbReference type="OrthoDB" id="115981at2157"/>
<dbReference type="UniPathway" id="UPA00906">
    <property type="reaction ID" value="UER00895"/>
</dbReference>
<dbReference type="Proteomes" id="UP000000805">
    <property type="component" value="Chromosome"/>
</dbReference>
<dbReference type="GO" id="GO:0005737">
    <property type="term" value="C:cytoplasm"/>
    <property type="evidence" value="ECO:0007669"/>
    <property type="project" value="UniProtKB-SubCell"/>
</dbReference>
<dbReference type="GO" id="GO:0005524">
    <property type="term" value="F:ATP binding"/>
    <property type="evidence" value="ECO:0007669"/>
    <property type="project" value="UniProtKB-UniRule"/>
</dbReference>
<dbReference type="GO" id="GO:0004828">
    <property type="term" value="F:serine-tRNA ligase activity"/>
    <property type="evidence" value="ECO:0007669"/>
    <property type="project" value="UniProtKB-UniRule"/>
</dbReference>
<dbReference type="GO" id="GO:0008270">
    <property type="term" value="F:zinc ion binding"/>
    <property type="evidence" value="ECO:0007669"/>
    <property type="project" value="UniProtKB-UniRule"/>
</dbReference>
<dbReference type="GO" id="GO:0016260">
    <property type="term" value="P:selenocysteine biosynthetic process"/>
    <property type="evidence" value="ECO:0007669"/>
    <property type="project" value="UniProtKB-UniRule"/>
</dbReference>
<dbReference type="GO" id="GO:0006434">
    <property type="term" value="P:seryl-tRNA aminoacylation"/>
    <property type="evidence" value="ECO:0007669"/>
    <property type="project" value="UniProtKB-UniRule"/>
</dbReference>
<dbReference type="CDD" id="cd00670">
    <property type="entry name" value="Gly_His_Pro_Ser_Thr_tRS_core"/>
    <property type="match status" value="1"/>
</dbReference>
<dbReference type="Gene3D" id="3.30.70.1920">
    <property type="match status" value="1"/>
</dbReference>
<dbReference type="Gene3D" id="3.30.930.10">
    <property type="entry name" value="Bira Bifunctional Protein, Domain 2"/>
    <property type="match status" value="1"/>
</dbReference>
<dbReference type="HAMAP" id="MF_01278">
    <property type="entry name" value="Ser_tRNA_synth_type2"/>
    <property type="match status" value="1"/>
</dbReference>
<dbReference type="InterPro" id="IPR002314">
    <property type="entry name" value="aa-tRNA-synt_IIb"/>
</dbReference>
<dbReference type="InterPro" id="IPR045864">
    <property type="entry name" value="aa-tRNA-synth_II/BPL/LPL"/>
</dbReference>
<dbReference type="InterPro" id="IPR004503">
    <property type="entry name" value="Ser-tRNA-ligase_2_arc"/>
</dbReference>
<dbReference type="InterPro" id="IPR041293">
    <property type="entry name" value="SerS_tRNA-bd"/>
</dbReference>
<dbReference type="NCBIfam" id="NF002120">
    <property type="entry name" value="PRK00960.1"/>
    <property type="match status" value="1"/>
</dbReference>
<dbReference type="NCBIfam" id="TIGR00415">
    <property type="entry name" value="serS_MJ"/>
    <property type="match status" value="1"/>
</dbReference>
<dbReference type="Pfam" id="PF00587">
    <property type="entry name" value="tRNA-synt_2b"/>
    <property type="match status" value="1"/>
</dbReference>
<dbReference type="Pfam" id="PF18490">
    <property type="entry name" value="tRNA_bind_4"/>
    <property type="match status" value="1"/>
</dbReference>
<dbReference type="SUPFAM" id="SSF55681">
    <property type="entry name" value="Class II aaRS and biotin synthetases"/>
    <property type="match status" value="1"/>
</dbReference>
<proteinExistence type="evidence at protein level"/>
<name>SYS2_METJA</name>
<reference key="1">
    <citation type="journal article" date="1996" name="Science">
        <title>Complete genome sequence of the methanogenic archaeon, Methanococcus jannaschii.</title>
        <authorList>
            <person name="Bult C.J."/>
            <person name="White O."/>
            <person name="Olsen G.J."/>
            <person name="Zhou L."/>
            <person name="Fleischmann R.D."/>
            <person name="Sutton G.G."/>
            <person name="Blake J.A."/>
            <person name="FitzGerald L.M."/>
            <person name="Clayton R.A."/>
            <person name="Gocayne J.D."/>
            <person name="Kerlavage A.R."/>
            <person name="Dougherty B.A."/>
            <person name="Tomb J.-F."/>
            <person name="Adams M.D."/>
            <person name="Reich C.I."/>
            <person name="Overbeek R."/>
            <person name="Kirkness E.F."/>
            <person name="Weinstock K.G."/>
            <person name="Merrick J.M."/>
            <person name="Glodek A."/>
            <person name="Scott J.L."/>
            <person name="Geoghagen N.S.M."/>
            <person name="Weidman J.F."/>
            <person name="Fuhrmann J.L."/>
            <person name="Nguyen D."/>
            <person name="Utterback T.R."/>
            <person name="Kelley J.M."/>
            <person name="Peterson J.D."/>
            <person name="Sadow P.W."/>
            <person name="Hanna M.C."/>
            <person name="Cotton M.D."/>
            <person name="Roberts K.M."/>
            <person name="Hurst M.A."/>
            <person name="Kaine B.P."/>
            <person name="Borodovsky M."/>
            <person name="Klenk H.-P."/>
            <person name="Fraser C.M."/>
            <person name="Smith H.O."/>
            <person name="Woese C.R."/>
            <person name="Venter J.C."/>
        </authorList>
    </citation>
    <scope>NUCLEOTIDE SEQUENCE [LARGE SCALE GENOMIC DNA]</scope>
    <source>
        <strain>ATCC 43067 / DSM 2661 / JAL-1 / JCM 10045 / NBRC 100440</strain>
    </source>
</reference>
<reference key="2">
    <citation type="journal article" date="2004" name="Eur. J. Biochem.">
        <title>The unusual methanogenic seryl-tRNA synthetase recognizes tRNASer species from all three kingdoms of life.</title>
        <authorList>
            <person name="Bilokapic S."/>
            <person name="Korencic D."/>
            <person name="Soell D."/>
            <person name="Weygand-Durasevic I."/>
        </authorList>
    </citation>
    <scope>FUNCTION</scope>
    <scope>SUBUNIT</scope>
    <scope>TEMPERATURE DEPENDENCE</scope>
    <source>
        <strain>ATCC 43067 / DSM 2661 / JAL-1 / JCM 10045 / NBRC 100440</strain>
    </source>
</reference>
<evidence type="ECO:0000250" key="1"/>
<evidence type="ECO:0000269" key="2">
    <source>
    </source>
</evidence>
<evidence type="ECO:0000305" key="3"/>
<keyword id="KW-0030">Aminoacyl-tRNA synthetase</keyword>
<keyword id="KW-0067">ATP-binding</keyword>
<keyword id="KW-0963">Cytoplasm</keyword>
<keyword id="KW-0436">Ligase</keyword>
<keyword id="KW-0479">Metal-binding</keyword>
<keyword id="KW-0547">Nucleotide-binding</keyword>
<keyword id="KW-0648">Protein biosynthesis</keyword>
<keyword id="KW-1185">Reference proteome</keyword>
<keyword id="KW-0862">Zinc</keyword>
<comment type="function">
    <text evidence="2">Catalyzes the attachment of serine to tRNA(Ser). Is also able to aminoacylate tRNA(Sec) with serine, to form the misacylated tRNA L-seryl-tRNA(Sec), which will be further converted into selenocysteinyl-tRNA(Sec).</text>
</comment>
<comment type="catalytic activity">
    <reaction>
        <text>tRNA(Ser) + L-serine + ATP = L-seryl-tRNA(Ser) + AMP + diphosphate + H(+)</text>
        <dbReference type="Rhea" id="RHEA:12292"/>
        <dbReference type="Rhea" id="RHEA-COMP:9669"/>
        <dbReference type="Rhea" id="RHEA-COMP:9703"/>
        <dbReference type="ChEBI" id="CHEBI:15378"/>
        <dbReference type="ChEBI" id="CHEBI:30616"/>
        <dbReference type="ChEBI" id="CHEBI:33019"/>
        <dbReference type="ChEBI" id="CHEBI:33384"/>
        <dbReference type="ChEBI" id="CHEBI:78442"/>
        <dbReference type="ChEBI" id="CHEBI:78533"/>
        <dbReference type="ChEBI" id="CHEBI:456215"/>
        <dbReference type="EC" id="6.1.1.11"/>
    </reaction>
</comment>
<comment type="catalytic activity">
    <reaction>
        <text>tRNA(Sec) + L-serine + ATP = L-seryl-tRNA(Sec) + AMP + diphosphate + H(+)</text>
        <dbReference type="Rhea" id="RHEA:42580"/>
        <dbReference type="Rhea" id="RHEA-COMP:9742"/>
        <dbReference type="Rhea" id="RHEA-COMP:10128"/>
        <dbReference type="ChEBI" id="CHEBI:15378"/>
        <dbReference type="ChEBI" id="CHEBI:30616"/>
        <dbReference type="ChEBI" id="CHEBI:33019"/>
        <dbReference type="ChEBI" id="CHEBI:33384"/>
        <dbReference type="ChEBI" id="CHEBI:78442"/>
        <dbReference type="ChEBI" id="CHEBI:78533"/>
        <dbReference type="ChEBI" id="CHEBI:456215"/>
        <dbReference type="EC" id="6.1.1.11"/>
    </reaction>
</comment>
<comment type="cofactor">
    <cofactor evidence="1">
        <name>Zn(2+)</name>
        <dbReference type="ChEBI" id="CHEBI:29105"/>
    </cofactor>
    <text evidence="1">Binds 1 Zn(2+) ion per subunit. This ion is coordinated with 2 cysteines, 1 glutamate and a water molecule that dissociates from the zinc ion to allow the coordination of the amino group of the serine substrate, which is essential for catalysis.</text>
</comment>
<comment type="biophysicochemical properties">
    <temperatureDependence>
        <text evidence="2">Thermostable. Fully active at 80 degrees Celsius.</text>
    </temperatureDependence>
</comment>
<comment type="pathway">
    <text>Aminoacyl-tRNA biosynthesis; selenocysteinyl-tRNA(Sec) biosynthesis; L-seryl-tRNA(Sec) from L-serine and tRNA(Sec): step 1/1.</text>
</comment>
<comment type="subunit">
    <text evidence="2">Homodimer.</text>
</comment>
<comment type="subcellular location">
    <subcellularLocation>
        <location evidence="1">Cytoplasm</location>
    </subcellularLocation>
</comment>
<comment type="domain">
    <text evidence="1">Consists of two distinct domains, a catalytic core and a N-terminal extension that is presumably involved in tRNA binding.</text>
</comment>
<comment type="similarity">
    <text evidence="3">Belongs to the class-II aminoacyl-tRNA synthetase family. Type-2 seryl-tRNA synthetase subfamily.</text>
</comment>
<gene>
    <name type="primary">serS</name>
    <name type="ordered locus">MJ1077</name>
</gene>
<accession>Q58477</accession>
<organism>
    <name type="scientific">Methanocaldococcus jannaschii (strain ATCC 43067 / DSM 2661 / JAL-1 / JCM 10045 / NBRC 100440)</name>
    <name type="common">Methanococcus jannaschii</name>
    <dbReference type="NCBI Taxonomy" id="243232"/>
    <lineage>
        <taxon>Archaea</taxon>
        <taxon>Methanobacteriati</taxon>
        <taxon>Methanobacteriota</taxon>
        <taxon>Methanomada group</taxon>
        <taxon>Methanococci</taxon>
        <taxon>Methanococcales</taxon>
        <taxon>Methanocaldococcaceae</taxon>
        <taxon>Methanocaldococcus</taxon>
    </lineage>
</organism>
<feature type="chain" id="PRO_0000122174" description="Type-2 serine--tRNA ligase">
    <location>
        <begin position="1"/>
        <end position="521"/>
    </location>
</feature>
<feature type="binding site" evidence="1">
    <location>
        <position position="316"/>
    </location>
    <ligand>
        <name>L-serine</name>
        <dbReference type="ChEBI" id="CHEBI:33384"/>
    </ligand>
</feature>
<feature type="binding site" evidence="1">
    <location>
        <position position="318"/>
    </location>
    <ligand>
        <name>Zn(2+)</name>
        <dbReference type="ChEBI" id="CHEBI:29105"/>
        <note>catalytic</note>
    </ligand>
</feature>
<feature type="binding site" evidence="1">
    <location>
        <begin position="347"/>
        <end position="349"/>
    </location>
    <ligand>
        <name>ATP</name>
        <dbReference type="ChEBI" id="CHEBI:30616"/>
    </ligand>
</feature>
<feature type="binding site" evidence="1">
    <location>
        <position position="347"/>
    </location>
    <ligand>
        <name>L-serine</name>
        <dbReference type="ChEBI" id="CHEBI:33384"/>
    </ligand>
</feature>
<feature type="binding site" evidence="1">
    <location>
        <begin position="358"/>
        <end position="359"/>
    </location>
    <ligand>
        <name>ATP</name>
        <dbReference type="ChEBI" id="CHEBI:30616"/>
    </ligand>
</feature>
<feature type="binding site" evidence="1">
    <location>
        <begin position="364"/>
        <end position="366"/>
    </location>
    <ligand>
        <name>L-serine</name>
        <dbReference type="ChEBI" id="CHEBI:33384"/>
    </ligand>
</feature>
<feature type="binding site" evidence="1">
    <location>
        <position position="366"/>
    </location>
    <ligand>
        <name>Zn(2+)</name>
        <dbReference type="ChEBI" id="CHEBI:29105"/>
        <note>catalytic</note>
    </ligand>
</feature>
<feature type="binding site" evidence="1">
    <location>
        <position position="473"/>
    </location>
    <ligand>
        <name>Zn(2+)</name>
        <dbReference type="ChEBI" id="CHEBI:29105"/>
        <note>catalytic</note>
    </ligand>
</feature>
<feature type="binding site" evidence="1">
    <location>
        <position position="480"/>
    </location>
    <ligand>
        <name>ATP</name>
        <dbReference type="ChEBI" id="CHEBI:30616"/>
    </ligand>
</feature>
<sequence length="521" mass="60632">MKLTFDLDGKIIFSKELSEEAKNAVEEVLKNADSIFLKGVPKGKENEASKIKSYEFEGNILKLKIASGTYTRAHEGLIRLRKPLAEKLGRNFRIGVRGIEIDNYVITIETDEDKAKKLEGIKVPECEAKVEGNKIILTFKDIGESELKRNIIDRAIKFVKTELEKEEEDLTFKVCKIPPGTIVSEYKAKRKITFDKDPTDVAEKLGWVKKFPGRGQWFYTPPITALFRALEELIVEEVVKKIGFQECLFPKLIPLEIMYKMRYLEGLPEGMYYVCPPKREPELFKEFVNEMMIKKEIPIEKLKNLLRDPGYVLAPAQCEPFYQFFEGEVIDVDKPIMFFDRSGWTYRWEGGGARGLDRVNEFLRVECVWIGSPEFVEETRDKTLKYAEKLAEKLDLEYWVEVGDDPFYLEGRKKEDRGIEFPDVPKYEMRLWLPHIKDERKGVAVTSANVHGTHFVEGFRIKDYKGRRVWTGCTGYGITRWVVGYLAQYGFNFDDWHPIIKKKIKKLPEVPQLITWPKKDE</sequence>
<protein>
    <recommendedName>
        <fullName>Type-2 serine--tRNA ligase</fullName>
        <ecNumber>6.1.1.11</ecNumber>
    </recommendedName>
    <alternativeName>
        <fullName>Seryl-tRNA synthetase</fullName>
        <shortName>SerRS</shortName>
    </alternativeName>
    <alternativeName>
        <fullName>Seryl-tRNA(Ser/Sec) synthetase</fullName>
    </alternativeName>
</protein>